<reference key="1">
    <citation type="submission" date="2005-02" db="EMBL/GenBank/DDBJ databases">
        <authorList>
            <consortium name="NIH - Xenopus Gene Collection (XGC) project"/>
        </authorList>
    </citation>
    <scope>NUCLEOTIDE SEQUENCE [LARGE SCALE MRNA]</scope>
</reference>
<dbReference type="EMBL" id="BC089637">
    <property type="protein sequence ID" value="AAH89637.1"/>
    <property type="molecule type" value="mRNA"/>
</dbReference>
<dbReference type="RefSeq" id="NP_001015706.1">
    <property type="nucleotide sequence ID" value="NM_001015706.1"/>
</dbReference>
<dbReference type="SMR" id="Q5FW42"/>
<dbReference type="FunCoup" id="Q5FW42">
    <property type="interactions" value="1655"/>
</dbReference>
<dbReference type="STRING" id="8364.ENSXETP00000020340"/>
<dbReference type="PaxDb" id="8364-ENSXETP00000013692"/>
<dbReference type="DNASU" id="548423"/>
<dbReference type="GeneID" id="548423"/>
<dbReference type="KEGG" id="xtr:548423"/>
<dbReference type="AGR" id="Xenbase:XB-GENE-1000632"/>
<dbReference type="CTD" id="10540"/>
<dbReference type="Xenbase" id="XB-GENE-1000632">
    <property type="gene designation" value="dctn2"/>
</dbReference>
<dbReference type="eggNOG" id="KOG3958">
    <property type="taxonomic scope" value="Eukaryota"/>
</dbReference>
<dbReference type="HOGENOM" id="CLU_049964_1_0_1"/>
<dbReference type="InParanoid" id="Q5FW42"/>
<dbReference type="OrthoDB" id="4977at2759"/>
<dbReference type="Reactome" id="R-XTR-2565942">
    <property type="pathway name" value="Regulation of PLK1 Activity at G2/M Transition"/>
</dbReference>
<dbReference type="Reactome" id="R-XTR-380259">
    <property type="pathway name" value="Loss of Nlp from mitotic centrosomes"/>
</dbReference>
<dbReference type="Reactome" id="R-XTR-380270">
    <property type="pathway name" value="Recruitment of mitotic centrosome proteins and complexes"/>
</dbReference>
<dbReference type="Reactome" id="R-XTR-380320">
    <property type="pathway name" value="Recruitment of NuMA to mitotic centrosomes"/>
</dbReference>
<dbReference type="Reactome" id="R-XTR-5620912">
    <property type="pathway name" value="Anchoring of the basal body to the plasma membrane"/>
</dbReference>
<dbReference type="Reactome" id="R-XTR-6807878">
    <property type="pathway name" value="COPI-mediated anterograde transport"/>
</dbReference>
<dbReference type="Reactome" id="R-XTR-8854518">
    <property type="pathway name" value="AURKA Activation by TPX2"/>
</dbReference>
<dbReference type="Proteomes" id="UP000008143">
    <property type="component" value="Chromosome 2"/>
</dbReference>
<dbReference type="Bgee" id="ENSXETG00000006234">
    <property type="expression patterns" value="Expressed in testis and 15 other cell types or tissues"/>
</dbReference>
<dbReference type="ExpressionAtlas" id="Q5FW42">
    <property type="expression patterns" value="baseline"/>
</dbReference>
<dbReference type="GO" id="GO:0005813">
    <property type="term" value="C:centrosome"/>
    <property type="evidence" value="ECO:0007669"/>
    <property type="project" value="UniProtKB-SubCell"/>
</dbReference>
<dbReference type="GO" id="GO:0005737">
    <property type="term" value="C:cytoplasm"/>
    <property type="evidence" value="ECO:0007669"/>
    <property type="project" value="UniProtKB-KW"/>
</dbReference>
<dbReference type="GO" id="GO:0005869">
    <property type="term" value="C:dynactin complex"/>
    <property type="evidence" value="ECO:0007669"/>
    <property type="project" value="InterPro"/>
</dbReference>
<dbReference type="GO" id="GO:0030286">
    <property type="term" value="C:dynein complex"/>
    <property type="evidence" value="ECO:0007669"/>
    <property type="project" value="UniProtKB-KW"/>
</dbReference>
<dbReference type="GO" id="GO:0016020">
    <property type="term" value="C:membrane"/>
    <property type="evidence" value="ECO:0007669"/>
    <property type="project" value="UniProtKB-SubCell"/>
</dbReference>
<dbReference type="GO" id="GO:0005874">
    <property type="term" value="C:microtubule"/>
    <property type="evidence" value="ECO:0007669"/>
    <property type="project" value="UniProtKB-KW"/>
</dbReference>
<dbReference type="GO" id="GO:0031982">
    <property type="term" value="C:vesicle"/>
    <property type="evidence" value="ECO:0000250"/>
    <property type="project" value="UniProtKB"/>
</dbReference>
<dbReference type="GO" id="GO:0003401">
    <property type="term" value="P:axis elongation"/>
    <property type="evidence" value="ECO:0000315"/>
    <property type="project" value="Xenbase"/>
</dbReference>
<dbReference type="GO" id="GO:0007017">
    <property type="term" value="P:microtubule-based process"/>
    <property type="evidence" value="ECO:0007669"/>
    <property type="project" value="InterPro"/>
</dbReference>
<dbReference type="InterPro" id="IPR028133">
    <property type="entry name" value="Dynamitin"/>
</dbReference>
<dbReference type="PANTHER" id="PTHR15346">
    <property type="entry name" value="DYNACTIN SUBUNIT"/>
    <property type="match status" value="1"/>
</dbReference>
<dbReference type="Pfam" id="PF04912">
    <property type="entry name" value="Dynamitin"/>
    <property type="match status" value="1"/>
</dbReference>
<organism>
    <name type="scientific">Xenopus tropicalis</name>
    <name type="common">Western clawed frog</name>
    <name type="synonym">Silurana tropicalis</name>
    <dbReference type="NCBI Taxonomy" id="8364"/>
    <lineage>
        <taxon>Eukaryota</taxon>
        <taxon>Metazoa</taxon>
        <taxon>Chordata</taxon>
        <taxon>Craniata</taxon>
        <taxon>Vertebrata</taxon>
        <taxon>Euteleostomi</taxon>
        <taxon>Amphibia</taxon>
        <taxon>Batrachia</taxon>
        <taxon>Anura</taxon>
        <taxon>Pipoidea</taxon>
        <taxon>Pipidae</taxon>
        <taxon>Xenopodinae</taxon>
        <taxon>Xenopus</taxon>
        <taxon>Silurana</taxon>
    </lineage>
</organism>
<accession>Q5FW42</accession>
<proteinExistence type="evidence at transcript level"/>
<protein>
    <recommendedName>
        <fullName>Dynactin subunit 2</fullName>
    </recommendedName>
</protein>
<keyword id="KW-0175">Coiled coil</keyword>
<keyword id="KW-0963">Cytoplasm</keyword>
<keyword id="KW-0206">Cytoskeleton</keyword>
<keyword id="KW-0243">Dynein</keyword>
<keyword id="KW-0472">Membrane</keyword>
<keyword id="KW-0493">Microtubule</keyword>
<keyword id="KW-1185">Reference proteome</keyword>
<sequence length="405" mass="45005">MADPKYADLPGIARNEPDVYETSDLPEDDQAEFDAELEELTSTSVEHIIVNPNAAYDKFKDKKVGTRGLDFSDRITKSKRTGYESGEYEILGEGIGIKETPQQKYQRLLHEIQELTQEVEKAQSTVKESAAEEKLTPVALAKQVAALKQQLVSTHLEKLLGPDAAINLTDPDGALAKRLLTQLDVAKTRKNPEGKSPAKGPGPDNENFVTYELHCRPEQNKFSQAAKMAELEKRLGELEAAVRNDQDTQNPLTVGLQGSCLMDTVEILQAKVNLLDVASLDQVEARLQSVLGKMNEIAKHKAAIEDADTESKVHQLYETVQKWDSMSSTLPQVVQRLLMLKQLHEQAMQFGQLLAHLDTTQQMISNSLKDNTNALAMVQKAMKENLATVEDNFTSIDARIKKLSK</sequence>
<comment type="function">
    <text evidence="1 3">Part of the dynactin complex that activates the molecular motor dynein for ultra-processive transport along microtubules. In the dynactin soulder domain, binds the ACTR1A filament and acts as a molecular ruler to determine the length (By similarity). Modulates cytoplasmic dynein binding to an organelle, and plays a role in prometaphase chromosome alignment and spindle organization during mitosis. Involved in anchoring microtubules to centrosomes (By similarity).</text>
</comment>
<comment type="subunit">
    <text evidence="1">Subunit of dynactin, a multiprotein complex part of a tripartite complex with dynein and a adapter, such as BICDL1, BICD2 or HOOK3. The dynactin complex is built around ACTR1A/ACTB filament and consists of an actin-related filament composed of a shoulder domain, a pointed end and a barbed end. Its length is defined by its flexible shoulder domain. The soulder is composed of 2 DCTN1 subunits, 4 DCTN2 and 2 DCTN3.</text>
</comment>
<comment type="subcellular location">
    <subcellularLocation>
        <location evidence="2">Cytoplasm</location>
        <location evidence="2">Cytoskeleton</location>
        <location evidence="2">Microtubule organizing center</location>
        <location evidence="2">Centrosome</location>
    </subcellularLocation>
    <subcellularLocation>
        <location evidence="2">Membrane</location>
        <topology evidence="2">Peripheral membrane protein</topology>
    </subcellularLocation>
    <subcellularLocation>
        <location evidence="1">Cytoplasm</location>
        <location evidence="1">Cytoskeleton</location>
    </subcellularLocation>
</comment>
<comment type="similarity">
    <text evidence="6">Belongs to the dynactin subunit 2 family.</text>
</comment>
<gene>
    <name type="primary">dctn2</name>
</gene>
<evidence type="ECO:0000250" key="1">
    <source>
        <dbReference type="UniProtKB" id="A0A5G2QD80"/>
    </source>
</evidence>
<evidence type="ECO:0000250" key="2">
    <source>
        <dbReference type="UniProtKB" id="Q13561"/>
    </source>
</evidence>
<evidence type="ECO:0000250" key="3">
    <source>
        <dbReference type="UniProtKB" id="Q99KJ8"/>
    </source>
</evidence>
<evidence type="ECO:0000255" key="4"/>
<evidence type="ECO:0000256" key="5">
    <source>
        <dbReference type="SAM" id="MobiDB-lite"/>
    </source>
</evidence>
<evidence type="ECO:0000305" key="6"/>
<name>DCTN2_XENTR</name>
<feature type="chain" id="PRO_0000288771" description="Dynactin subunit 2">
    <location>
        <begin position="1"/>
        <end position="405"/>
    </location>
</feature>
<feature type="region of interest" description="Disordered" evidence="5">
    <location>
        <begin position="1"/>
        <end position="24"/>
    </location>
</feature>
<feature type="region of interest" description="Disordered" evidence="5">
    <location>
        <begin position="186"/>
        <end position="207"/>
    </location>
</feature>
<feature type="coiled-coil region" evidence="4">
    <location>
        <begin position="101"/>
        <end position="134"/>
    </location>
</feature>
<feature type="coiled-coil region" evidence="4">
    <location>
        <begin position="383"/>
        <end position="403"/>
    </location>
</feature>